<gene>
    <name evidence="8" type="primary">graS</name>
    <name type="ordered locus">SAOUHSC_00666</name>
</gene>
<sequence>MNNLKWVAYFLKSRMNWIFWILFLNFLMLGISLIDYDFPIDSLFYIVSLNLSLTMIFLLLTYFKEVKLYKHFDKDKEIEEIKHKDLAETPFQRHTVDYLYRQISAHKEKVVEQQLQLNMHEQTITEFVHDIKTPVTAMKLLIDQEKNQERKQALLYEWSRINSMLDTQLYITRLESQRKDMYFDYVSLKRMVIDEIQLTRHISQVKGIGFDVDFKVDDYVYTDIKWCRMIIRQILSNALKYSENFNIEIGTELNDQHVSLYIKDYGRGISKKDMPRIFERGFTSTANRNETTSSGMGLYLVNSVKDQLGIHLQVTSTVGKGTTVRLIFPLQNEIVERMSEVTNLSF</sequence>
<accession>Q2G0D9</accession>
<comment type="function">
    <text evidence="3 4 5 6 7">Member of the two-component regulatory system GraR/GraS involved in resistance against cationic antimicrobial peptides (CAMPs) (PubMed:17502406, PubMed:18518949). Functions as a sensor protein kinase which phosphorylates GraR through the auxiliary protein GraX (PubMed:25685323). In turn, GraR up-regulates many genes such as adhesins, exoproteins, transporters, toxins, and proteins involved in cell wall synthesis (PubMed:21765893). Down-regulates the expression of many genes involved in RNA and amino acid synthesis or glycolysis. Confers resistance to vancomycin, polymyxin B, lysozyme and LL-37 (PubMed:17502406, PubMed:17676995, PubMed:18518949).</text>
</comment>
<comment type="catalytic activity">
    <reaction>
        <text>ATP + protein L-histidine = ADP + protein N-phospho-L-histidine.</text>
        <dbReference type="EC" id="2.7.13.3"/>
    </reaction>
</comment>
<comment type="subunit">
    <text evidence="7">Interacts with GraX.</text>
</comment>
<comment type="subcellular location">
    <subcellularLocation>
        <location evidence="9">Cell membrane</location>
        <topology evidence="9">Multi-pass membrane protein</topology>
    </subcellularLocation>
</comment>
<comment type="miscellaneous">
    <text evidence="7">Does not seem to possess an autophosphorylation activity.</text>
</comment>
<evidence type="ECO:0000255" key="1"/>
<evidence type="ECO:0000255" key="2">
    <source>
        <dbReference type="PROSITE-ProRule" id="PRU00107"/>
    </source>
</evidence>
<evidence type="ECO:0000269" key="3">
    <source>
    </source>
</evidence>
<evidence type="ECO:0000269" key="4">
    <source>
    </source>
</evidence>
<evidence type="ECO:0000269" key="5">
    <source>
    </source>
</evidence>
<evidence type="ECO:0000269" key="6">
    <source>
    </source>
</evidence>
<evidence type="ECO:0000269" key="7">
    <source>
    </source>
</evidence>
<evidence type="ECO:0000303" key="8">
    <source>
    </source>
</evidence>
<evidence type="ECO:0000305" key="9"/>
<dbReference type="EC" id="2.7.13.3"/>
<dbReference type="EMBL" id="CP000253">
    <property type="protein sequence ID" value="ABD29799.1"/>
    <property type="molecule type" value="Genomic_DNA"/>
</dbReference>
<dbReference type="RefSeq" id="WP_001061252.1">
    <property type="nucleotide sequence ID" value="NZ_LS483365.1"/>
</dbReference>
<dbReference type="RefSeq" id="YP_499225.1">
    <property type="nucleotide sequence ID" value="NC_007795.1"/>
</dbReference>
<dbReference type="SMR" id="Q2G0D9"/>
<dbReference type="STRING" id="93061.SAOUHSC_00666"/>
<dbReference type="PaxDb" id="1280-SAXN108_0727"/>
<dbReference type="GeneID" id="3919429"/>
<dbReference type="KEGG" id="sao:SAOUHSC_00666"/>
<dbReference type="PATRIC" id="fig|93061.5.peg.597"/>
<dbReference type="eggNOG" id="COG2205">
    <property type="taxonomic scope" value="Bacteria"/>
</dbReference>
<dbReference type="HOGENOM" id="CLU_000445_13_1_9"/>
<dbReference type="OrthoDB" id="9780487at2"/>
<dbReference type="PHI-base" id="PHI:7740"/>
<dbReference type="PRO" id="PR:Q2G0D9"/>
<dbReference type="Proteomes" id="UP000008816">
    <property type="component" value="Chromosome"/>
</dbReference>
<dbReference type="GO" id="GO:0005886">
    <property type="term" value="C:plasma membrane"/>
    <property type="evidence" value="ECO:0007669"/>
    <property type="project" value="UniProtKB-SubCell"/>
</dbReference>
<dbReference type="GO" id="GO:0005524">
    <property type="term" value="F:ATP binding"/>
    <property type="evidence" value="ECO:0007669"/>
    <property type="project" value="UniProtKB-KW"/>
</dbReference>
<dbReference type="GO" id="GO:0000155">
    <property type="term" value="F:phosphorelay sensor kinase activity"/>
    <property type="evidence" value="ECO:0007669"/>
    <property type="project" value="InterPro"/>
</dbReference>
<dbReference type="GO" id="GO:0046677">
    <property type="term" value="P:response to antibiotic"/>
    <property type="evidence" value="ECO:0007669"/>
    <property type="project" value="UniProtKB-KW"/>
</dbReference>
<dbReference type="Gene3D" id="3.30.565.10">
    <property type="entry name" value="Histidine kinase-like ATPase, C-terminal domain"/>
    <property type="match status" value="1"/>
</dbReference>
<dbReference type="InterPro" id="IPR050351">
    <property type="entry name" value="2-comp_sensor_kinase"/>
</dbReference>
<dbReference type="InterPro" id="IPR036890">
    <property type="entry name" value="HATPase_C_sf"/>
</dbReference>
<dbReference type="InterPro" id="IPR005467">
    <property type="entry name" value="His_kinase_dom"/>
</dbReference>
<dbReference type="InterPro" id="IPR036097">
    <property type="entry name" value="HisK_dim/P_sf"/>
</dbReference>
<dbReference type="InterPro" id="IPR004358">
    <property type="entry name" value="Sig_transdc_His_kin-like_C"/>
</dbReference>
<dbReference type="PANTHER" id="PTHR45453:SF2">
    <property type="entry name" value="HISTIDINE KINASE"/>
    <property type="match status" value="1"/>
</dbReference>
<dbReference type="PANTHER" id="PTHR45453">
    <property type="entry name" value="PHOSPHATE REGULON SENSOR PROTEIN PHOR"/>
    <property type="match status" value="1"/>
</dbReference>
<dbReference type="Pfam" id="PF02518">
    <property type="entry name" value="HATPase_c"/>
    <property type="match status" value="1"/>
</dbReference>
<dbReference type="PRINTS" id="PR00344">
    <property type="entry name" value="BCTRLSENSOR"/>
</dbReference>
<dbReference type="SMART" id="SM00387">
    <property type="entry name" value="HATPase_c"/>
    <property type="match status" value="1"/>
</dbReference>
<dbReference type="SUPFAM" id="SSF55874">
    <property type="entry name" value="ATPase domain of HSP90 chaperone/DNA topoisomerase II/histidine kinase"/>
    <property type="match status" value="1"/>
</dbReference>
<dbReference type="SUPFAM" id="SSF47384">
    <property type="entry name" value="Homodimeric domain of signal transducing histidine kinase"/>
    <property type="match status" value="1"/>
</dbReference>
<dbReference type="PROSITE" id="PS50109">
    <property type="entry name" value="HIS_KIN"/>
    <property type="match status" value="1"/>
</dbReference>
<proteinExistence type="evidence at protein level"/>
<keyword id="KW-0046">Antibiotic resistance</keyword>
<keyword id="KW-0067">ATP-binding</keyword>
<keyword id="KW-1003">Cell membrane</keyword>
<keyword id="KW-0418">Kinase</keyword>
<keyword id="KW-0472">Membrane</keyword>
<keyword id="KW-0547">Nucleotide-binding</keyword>
<keyword id="KW-1185">Reference proteome</keyword>
<keyword id="KW-0808">Transferase</keyword>
<keyword id="KW-0812">Transmembrane</keyword>
<keyword id="KW-1133">Transmembrane helix</keyword>
<keyword id="KW-0902">Two-component regulatory system</keyword>
<keyword id="KW-0843">Virulence</keyword>
<organism>
    <name type="scientific">Staphylococcus aureus (strain NCTC 8325 / PS 47)</name>
    <dbReference type="NCBI Taxonomy" id="93061"/>
    <lineage>
        <taxon>Bacteria</taxon>
        <taxon>Bacillati</taxon>
        <taxon>Bacillota</taxon>
        <taxon>Bacilli</taxon>
        <taxon>Bacillales</taxon>
        <taxon>Staphylococcaceae</taxon>
        <taxon>Staphylococcus</taxon>
    </lineage>
</organism>
<name>GRAS_STAA8</name>
<feature type="chain" id="PRO_0000347923" description="Sensor histidine kinase GraS">
    <location>
        <begin position="1"/>
        <end position="346"/>
    </location>
</feature>
<feature type="transmembrane region" description="Helical" evidence="1">
    <location>
        <begin position="15"/>
        <end position="35"/>
    </location>
</feature>
<feature type="transmembrane region" description="Helical" evidence="1">
    <location>
        <begin position="43"/>
        <end position="63"/>
    </location>
</feature>
<feature type="domain" description="Histidine kinase" evidence="2">
    <location>
        <begin position="126"/>
        <end position="332"/>
    </location>
</feature>
<reference key="1">
    <citation type="book" date="2006" name="Gram positive pathogens, 2nd edition">
        <title>The Staphylococcus aureus NCTC 8325 genome.</title>
        <editorList>
            <person name="Fischetti V."/>
            <person name="Novick R."/>
            <person name="Ferretti J."/>
            <person name="Portnoy D."/>
            <person name="Rood J."/>
        </editorList>
        <authorList>
            <person name="Gillaspy A.F."/>
            <person name="Worrell V."/>
            <person name="Orvis J."/>
            <person name="Roe B.A."/>
            <person name="Dyer D.W."/>
            <person name="Iandolo J.J."/>
        </authorList>
    </citation>
    <scope>NUCLEOTIDE SEQUENCE [LARGE SCALE GENOMIC DNA]</scope>
    <source>
        <strain>NCTC 8325 / PS 47</strain>
    </source>
</reference>
<reference key="2">
    <citation type="journal article" date="2007" name="Antimicrob. Agents Chemother.">
        <title>Interaction of the graRS two-component system with the vraFG ABC transporter to support vancomycin-intermediate resistance in Staphylococcus aureus.</title>
        <authorList>
            <person name="Meehl M."/>
            <person name="Herbert S."/>
            <person name="Goetz F."/>
            <person name="Cheung A."/>
        </authorList>
    </citation>
    <scope>FUNCTION IN CATIONIC ANTIMICROBIAL PEPTIDE RESISTANCE</scope>
</reference>
<reference key="3">
    <citation type="journal article" date="2007" name="PLoS Pathog.">
        <title>Molecular basis of resistance to muramidase and cationic antimicrobial peptide activity of lysozyme in staphylococci.</title>
        <authorList>
            <person name="Herbert S."/>
            <person name="Bera A."/>
            <person name="Nerz C."/>
            <person name="Kraus D."/>
            <person name="Peschel A."/>
            <person name="Goerke C."/>
            <person name="Meehl M."/>
            <person name="Cheung A."/>
            <person name="Goetz F."/>
        </authorList>
    </citation>
    <scope>FUNCTION AS A GLOBAL REGULATOR</scope>
</reference>
<reference key="4">
    <citation type="journal article" date="2008" name="BMC Microbiol.">
        <title>The graRS regulatory system controls Staphylococcus aureus susceptibility to antimicrobial host defenses.</title>
        <authorList>
            <person name="Kraus D."/>
            <person name="Herbert S."/>
            <person name="Kristian S.A."/>
            <person name="Khosravi A."/>
            <person name="Nizet V."/>
            <person name="Goetz F."/>
            <person name="Peschel A."/>
        </authorList>
    </citation>
    <scope>FUNCTION IN CATIONIC ANTIMICROBIAL PEPTIDE RESISTANCE</scope>
</reference>
<reference key="5">
    <citation type="journal article" date="2011" name="PLoS ONE">
        <title>Investigation of the Staphylococcus aureus GraSR regulon reveals novel links to virulence, stress response and cell wall signal transduction pathways.</title>
        <authorList>
            <person name="Falord M."/>
            <person name="Maeder U."/>
            <person name="Hiron A."/>
            <person name="Debarbouille M."/>
            <person name="Msadek T."/>
        </authorList>
    </citation>
    <scope>FUNCTION</scope>
</reference>
<reference key="6">
    <citation type="journal article" date="2014" name="F1000Research">
        <title>Diversity of two-component systems: insights into the signal transduction mechanism by the Staphylococcus aureus two-component system GraSR.</title>
        <authorList>
            <person name="Muzamal U."/>
            <person name="Gomez D."/>
            <person name="Kapadia F."/>
            <person name="Golemi-Kotra D."/>
        </authorList>
    </citation>
    <scope>FUNCTION</scope>
    <scope>INTERACTION WITH GRAX</scope>
</reference>
<protein>
    <recommendedName>
        <fullName evidence="8">Sensor histidine kinase GraS</fullName>
        <ecNumber>2.7.13.3</ecNumber>
    </recommendedName>
    <alternativeName>
        <fullName>Glycopeptide resistance-associated protein S</fullName>
    </alternativeName>
</protein>